<protein>
    <recommendedName>
        <fullName evidence="1">tRNA pseudouridine synthase B</fullName>
        <ecNumber evidence="1">5.4.99.25</ecNumber>
    </recommendedName>
    <alternativeName>
        <fullName evidence="1">tRNA pseudouridine(55) synthase</fullName>
        <shortName evidence="1">Psi55 synthase</shortName>
    </alternativeName>
    <alternativeName>
        <fullName evidence="1">tRNA pseudouridylate synthase</fullName>
    </alternativeName>
    <alternativeName>
        <fullName evidence="1">tRNA-uridine isomerase</fullName>
    </alternativeName>
</protein>
<dbReference type="EC" id="5.4.99.25" evidence="1"/>
<dbReference type="EMBL" id="AP008226">
    <property type="protein sequence ID" value="BAD70040.1"/>
    <property type="molecule type" value="Genomic_DNA"/>
</dbReference>
<dbReference type="RefSeq" id="WP_011174127.1">
    <property type="nucleotide sequence ID" value="NC_006461.1"/>
</dbReference>
<dbReference type="RefSeq" id="YP_143483.1">
    <property type="nucleotide sequence ID" value="NC_006461.1"/>
</dbReference>
<dbReference type="SMR" id="Q5SLS6"/>
<dbReference type="EnsemblBacteria" id="BAD70040">
    <property type="protein sequence ID" value="BAD70040"/>
    <property type="gene ID" value="BAD70040"/>
</dbReference>
<dbReference type="GeneID" id="3170140"/>
<dbReference type="KEGG" id="ttj:TTHA0217"/>
<dbReference type="PATRIC" id="fig|300852.9.peg.215"/>
<dbReference type="eggNOG" id="COG0130">
    <property type="taxonomic scope" value="Bacteria"/>
</dbReference>
<dbReference type="HOGENOM" id="CLU_032087_0_2_0"/>
<dbReference type="PhylomeDB" id="Q5SLS6"/>
<dbReference type="Proteomes" id="UP000000532">
    <property type="component" value="Chromosome"/>
</dbReference>
<dbReference type="GO" id="GO:0003723">
    <property type="term" value="F:RNA binding"/>
    <property type="evidence" value="ECO:0007669"/>
    <property type="project" value="InterPro"/>
</dbReference>
<dbReference type="GO" id="GO:0160148">
    <property type="term" value="F:tRNA pseudouridine(55) synthase activity"/>
    <property type="evidence" value="ECO:0007669"/>
    <property type="project" value="UniProtKB-EC"/>
</dbReference>
<dbReference type="GO" id="GO:1990481">
    <property type="term" value="P:mRNA pseudouridine synthesis"/>
    <property type="evidence" value="ECO:0007669"/>
    <property type="project" value="TreeGrafter"/>
</dbReference>
<dbReference type="GO" id="GO:0031119">
    <property type="term" value="P:tRNA pseudouridine synthesis"/>
    <property type="evidence" value="ECO:0007669"/>
    <property type="project" value="UniProtKB-UniRule"/>
</dbReference>
<dbReference type="CDD" id="cd02573">
    <property type="entry name" value="PseudoU_synth_EcTruB"/>
    <property type="match status" value="1"/>
</dbReference>
<dbReference type="Gene3D" id="3.30.2350.10">
    <property type="entry name" value="Pseudouridine synthase"/>
    <property type="match status" value="1"/>
</dbReference>
<dbReference type="HAMAP" id="MF_01080">
    <property type="entry name" value="TruB_bact"/>
    <property type="match status" value="1"/>
</dbReference>
<dbReference type="InterPro" id="IPR020103">
    <property type="entry name" value="PsdUridine_synth_cat_dom_sf"/>
</dbReference>
<dbReference type="InterPro" id="IPR002501">
    <property type="entry name" value="PsdUridine_synth_N"/>
</dbReference>
<dbReference type="InterPro" id="IPR014780">
    <property type="entry name" value="tRNA_psdUridine_synth_TruB"/>
</dbReference>
<dbReference type="NCBIfam" id="TIGR00431">
    <property type="entry name" value="TruB"/>
    <property type="match status" value="1"/>
</dbReference>
<dbReference type="PANTHER" id="PTHR13767:SF2">
    <property type="entry name" value="PSEUDOURIDYLATE SYNTHASE TRUB1"/>
    <property type="match status" value="1"/>
</dbReference>
<dbReference type="PANTHER" id="PTHR13767">
    <property type="entry name" value="TRNA-PSEUDOURIDINE SYNTHASE"/>
    <property type="match status" value="1"/>
</dbReference>
<dbReference type="Pfam" id="PF01509">
    <property type="entry name" value="TruB_N"/>
    <property type="match status" value="1"/>
</dbReference>
<dbReference type="SUPFAM" id="SSF55120">
    <property type="entry name" value="Pseudouridine synthase"/>
    <property type="match status" value="1"/>
</dbReference>
<feature type="chain" id="PRO_0000121931" description="tRNA pseudouridine synthase B">
    <location>
        <begin position="1"/>
        <end position="312"/>
    </location>
</feature>
<feature type="active site" description="Nucleophile" evidence="1">
    <location>
        <position position="37"/>
    </location>
</feature>
<accession>Q5SLS6</accession>
<name>TRUB_THET8</name>
<organism>
    <name type="scientific">Thermus thermophilus (strain ATCC 27634 / DSM 579 / HB8)</name>
    <dbReference type="NCBI Taxonomy" id="300852"/>
    <lineage>
        <taxon>Bacteria</taxon>
        <taxon>Thermotogati</taxon>
        <taxon>Deinococcota</taxon>
        <taxon>Deinococci</taxon>
        <taxon>Thermales</taxon>
        <taxon>Thermaceae</taxon>
        <taxon>Thermus</taxon>
    </lineage>
</organism>
<reference key="1">
    <citation type="submission" date="2004-11" db="EMBL/GenBank/DDBJ databases">
        <title>Complete genome sequence of Thermus thermophilus HB8.</title>
        <authorList>
            <person name="Masui R."/>
            <person name="Kurokawa K."/>
            <person name="Nakagawa N."/>
            <person name="Tokunaga F."/>
            <person name="Koyama Y."/>
            <person name="Shibata T."/>
            <person name="Oshima T."/>
            <person name="Yokoyama S."/>
            <person name="Yasunaga T."/>
            <person name="Kuramitsu S."/>
        </authorList>
    </citation>
    <scope>NUCLEOTIDE SEQUENCE [LARGE SCALE GENOMIC DNA]</scope>
    <source>
        <strain>ATCC 27634 / DSM 579 / HB8</strain>
    </source>
</reference>
<proteinExistence type="inferred from homology"/>
<evidence type="ECO:0000255" key="1">
    <source>
        <dbReference type="HAMAP-Rule" id="MF_01080"/>
    </source>
</evidence>
<keyword id="KW-0413">Isomerase</keyword>
<keyword id="KW-1185">Reference proteome</keyword>
<keyword id="KW-0819">tRNA processing</keyword>
<sequence>MALYAVDKPLHLTSHDVVEEARRRLSTRRVGHTGTLDPLATGLLLLVTNESTKLVPFLSGEDKEYIAWVSFGATTPTLDAEGPISEEAPARFDRKDLEAALPRFLEVREQVPPLYSAIKVGGKRAYEAAREGKPLALGPRPVRYLEVELLAFDPEPIPHPIAPSARGWRLAERRGRPVRLPRPLGAYPTAVVRLVVGPGTYVRAFARDLGEMLGTKAFLSGLVRTRVGRVGLERAVALSDLSPEKAIPELDVLPFPVVELSHTEARRVLEGMPLPIPAMGYVTLVDSKRRLLAIAEGDGFKLKIRRVFAKEA</sequence>
<gene>
    <name evidence="1" type="primary">truB</name>
    <name type="ordered locus">TTHA0217</name>
</gene>
<comment type="function">
    <text evidence="1">Responsible for synthesis of pseudouridine from uracil-55 in the psi GC loop of transfer RNAs.</text>
</comment>
<comment type="catalytic activity">
    <reaction evidence="1">
        <text>uridine(55) in tRNA = pseudouridine(55) in tRNA</text>
        <dbReference type="Rhea" id="RHEA:42532"/>
        <dbReference type="Rhea" id="RHEA-COMP:10101"/>
        <dbReference type="Rhea" id="RHEA-COMP:10102"/>
        <dbReference type="ChEBI" id="CHEBI:65314"/>
        <dbReference type="ChEBI" id="CHEBI:65315"/>
        <dbReference type="EC" id="5.4.99.25"/>
    </reaction>
</comment>
<comment type="similarity">
    <text evidence="1">Belongs to the pseudouridine synthase TruB family. Type 1 subfamily.</text>
</comment>